<gene>
    <name type="primary">ZXDA</name>
</gene>
<protein>
    <recommendedName>
        <fullName>Zinc finger X-linked protein ZXDA</fullName>
    </recommendedName>
</protein>
<dbReference type="EMBL" id="AL034396">
    <property type="status" value="NOT_ANNOTATED_CDS"/>
    <property type="molecule type" value="Genomic_DNA"/>
</dbReference>
<dbReference type="EMBL" id="BC059356">
    <property type="protein sequence ID" value="AAH59356.1"/>
    <property type="molecule type" value="mRNA"/>
</dbReference>
<dbReference type="EMBL" id="L14787">
    <property type="protein sequence ID" value="AAC37521.1"/>
    <property type="status" value="ALT_FRAME"/>
    <property type="molecule type" value="mRNA"/>
</dbReference>
<dbReference type="CCDS" id="CCDS14376.1"/>
<dbReference type="PIR" id="I54340">
    <property type="entry name" value="I54340"/>
</dbReference>
<dbReference type="RefSeq" id="NP_009087.1">
    <property type="nucleotide sequence ID" value="NM_007156.5"/>
</dbReference>
<dbReference type="SMR" id="P98168"/>
<dbReference type="BioGRID" id="113568">
    <property type="interactions" value="13"/>
</dbReference>
<dbReference type="FunCoup" id="P98168">
    <property type="interactions" value="137"/>
</dbReference>
<dbReference type="IntAct" id="P98168">
    <property type="interactions" value="2"/>
</dbReference>
<dbReference type="STRING" id="9606.ENSP00000351530"/>
<dbReference type="GlyGen" id="P98168">
    <property type="glycosylation" value="1 site"/>
</dbReference>
<dbReference type="iPTMnet" id="P98168"/>
<dbReference type="PhosphoSitePlus" id="P98168"/>
<dbReference type="BioMuta" id="ZXDA"/>
<dbReference type="DMDM" id="12644369"/>
<dbReference type="jPOST" id="P98168"/>
<dbReference type="MassIVE" id="P98168"/>
<dbReference type="PaxDb" id="9606-ENSP00000351530"/>
<dbReference type="PeptideAtlas" id="P98168"/>
<dbReference type="Antibodypedia" id="27019">
    <property type="antibodies" value="43 antibodies from 15 providers"/>
</dbReference>
<dbReference type="DNASU" id="7789"/>
<dbReference type="Ensembl" id="ENST00000358697.6">
    <property type="protein sequence ID" value="ENSP00000351530.4"/>
    <property type="gene ID" value="ENSG00000198205.7"/>
</dbReference>
<dbReference type="GeneID" id="7789"/>
<dbReference type="KEGG" id="hsa:7789"/>
<dbReference type="MANE-Select" id="ENST00000358697.6">
    <property type="protein sequence ID" value="ENSP00000351530.4"/>
    <property type="RefSeq nucleotide sequence ID" value="NM_007156.5"/>
    <property type="RefSeq protein sequence ID" value="NP_009087.1"/>
</dbReference>
<dbReference type="UCSC" id="uc004dve.4">
    <property type="organism name" value="human"/>
</dbReference>
<dbReference type="AGR" id="HGNC:13198"/>
<dbReference type="CTD" id="7789"/>
<dbReference type="DisGeNET" id="7789"/>
<dbReference type="GeneCards" id="ZXDA"/>
<dbReference type="HGNC" id="HGNC:13198">
    <property type="gene designation" value="ZXDA"/>
</dbReference>
<dbReference type="HPA" id="ENSG00000198205">
    <property type="expression patterns" value="Low tissue specificity"/>
</dbReference>
<dbReference type="MIM" id="300235">
    <property type="type" value="gene"/>
</dbReference>
<dbReference type="neXtProt" id="NX_P98168"/>
<dbReference type="OpenTargets" id="ENSG00000198205"/>
<dbReference type="PharmGKB" id="PA37763"/>
<dbReference type="VEuPathDB" id="HostDB:ENSG00000198205"/>
<dbReference type="eggNOG" id="KOG1721">
    <property type="taxonomic scope" value="Eukaryota"/>
</dbReference>
<dbReference type="GeneTree" id="ENSGT00940000164739"/>
<dbReference type="HOGENOM" id="CLU_007312_0_0_1"/>
<dbReference type="InParanoid" id="P98168"/>
<dbReference type="OMA" id="CEVCEDS"/>
<dbReference type="OrthoDB" id="6277246at2759"/>
<dbReference type="PAN-GO" id="P98168">
    <property type="GO annotations" value="3 GO annotations based on evolutionary models"/>
</dbReference>
<dbReference type="PhylomeDB" id="P98168"/>
<dbReference type="TreeFam" id="TF330996"/>
<dbReference type="PathwayCommons" id="P98168"/>
<dbReference type="SignaLink" id="P98168"/>
<dbReference type="BioGRID-ORCS" id="7789">
    <property type="hits" value="10 hits in 747 CRISPR screens"/>
</dbReference>
<dbReference type="GenomeRNAi" id="7789"/>
<dbReference type="Pharos" id="P98168">
    <property type="development level" value="Tbio"/>
</dbReference>
<dbReference type="PRO" id="PR:P98168"/>
<dbReference type="Proteomes" id="UP000005640">
    <property type="component" value="Chromosome X"/>
</dbReference>
<dbReference type="RNAct" id="P98168">
    <property type="molecule type" value="protein"/>
</dbReference>
<dbReference type="Bgee" id="ENSG00000198205">
    <property type="expression patterns" value="Expressed in endothelial cell and 138 other cell types or tissues"/>
</dbReference>
<dbReference type="GO" id="GO:0005634">
    <property type="term" value="C:nucleus"/>
    <property type="evidence" value="ECO:0000318"/>
    <property type="project" value="GO_Central"/>
</dbReference>
<dbReference type="GO" id="GO:0070742">
    <property type="term" value="F:C2H2 zinc finger domain binding"/>
    <property type="evidence" value="ECO:0000353"/>
    <property type="project" value="UniProtKB"/>
</dbReference>
<dbReference type="GO" id="GO:0003713">
    <property type="term" value="F:transcription coactivator activity"/>
    <property type="evidence" value="ECO:0000315"/>
    <property type="project" value="GO_Central"/>
</dbReference>
<dbReference type="GO" id="GO:0003712">
    <property type="term" value="F:transcription coregulator activity"/>
    <property type="evidence" value="ECO:0000318"/>
    <property type="project" value="GO_Central"/>
</dbReference>
<dbReference type="GO" id="GO:0008270">
    <property type="term" value="F:zinc ion binding"/>
    <property type="evidence" value="ECO:0007669"/>
    <property type="project" value="UniProtKB-KW"/>
</dbReference>
<dbReference type="GO" id="GO:0045893">
    <property type="term" value="P:positive regulation of DNA-templated transcription"/>
    <property type="evidence" value="ECO:0000315"/>
    <property type="project" value="UniProtKB"/>
</dbReference>
<dbReference type="GO" id="GO:0006357">
    <property type="term" value="P:regulation of transcription by RNA polymerase II"/>
    <property type="evidence" value="ECO:0000318"/>
    <property type="project" value="GO_Central"/>
</dbReference>
<dbReference type="FunFam" id="3.30.160.60:FF:000543">
    <property type="entry name" value="Zinc finger protein 384 like"/>
    <property type="match status" value="1"/>
</dbReference>
<dbReference type="FunFam" id="3.30.160.60:FF:001568">
    <property type="entry name" value="Zinc finger X-linked protein ZXDB"/>
    <property type="match status" value="1"/>
</dbReference>
<dbReference type="FunFam" id="3.30.160.60:FF:000872">
    <property type="entry name" value="zinc finger X-linked protein ZXDB"/>
    <property type="match status" value="1"/>
</dbReference>
<dbReference type="FunFam" id="3.30.160.60:FF:000257">
    <property type="entry name" value="ZXD family zinc finger C"/>
    <property type="match status" value="3"/>
</dbReference>
<dbReference type="FunFam" id="3.30.160.60:FF:000499">
    <property type="entry name" value="ZXD family zinc finger C"/>
    <property type="match status" value="1"/>
</dbReference>
<dbReference type="FunFam" id="3.30.160.60:FF:001192">
    <property type="entry name" value="ZXD family zinc finger C"/>
    <property type="match status" value="1"/>
</dbReference>
<dbReference type="Gene3D" id="3.30.160.60">
    <property type="entry name" value="Classic Zinc Finger"/>
    <property type="match status" value="9"/>
</dbReference>
<dbReference type="InterPro" id="IPR051061">
    <property type="entry name" value="Zinc_finger_trans_reg"/>
</dbReference>
<dbReference type="InterPro" id="IPR036236">
    <property type="entry name" value="Znf_C2H2_sf"/>
</dbReference>
<dbReference type="InterPro" id="IPR013087">
    <property type="entry name" value="Znf_C2H2_type"/>
</dbReference>
<dbReference type="PANTHER" id="PTHR46179">
    <property type="entry name" value="ZINC FINGER PROTEIN"/>
    <property type="match status" value="1"/>
</dbReference>
<dbReference type="PANTHER" id="PTHR46179:SF6">
    <property type="entry name" value="ZINC FINGER X-LINKED PROTEIN ZXDA"/>
    <property type="match status" value="1"/>
</dbReference>
<dbReference type="Pfam" id="PF00096">
    <property type="entry name" value="zf-C2H2"/>
    <property type="match status" value="4"/>
</dbReference>
<dbReference type="Pfam" id="PF13912">
    <property type="entry name" value="zf-C2H2_6"/>
    <property type="match status" value="1"/>
</dbReference>
<dbReference type="SMART" id="SM00355">
    <property type="entry name" value="ZnF_C2H2"/>
    <property type="match status" value="10"/>
</dbReference>
<dbReference type="SUPFAM" id="SSF57667">
    <property type="entry name" value="beta-beta-alpha zinc fingers"/>
    <property type="match status" value="5"/>
</dbReference>
<dbReference type="PROSITE" id="PS00028">
    <property type="entry name" value="ZINC_FINGER_C2H2_1"/>
    <property type="match status" value="10"/>
</dbReference>
<dbReference type="PROSITE" id="PS50157">
    <property type="entry name" value="ZINC_FINGER_C2H2_2"/>
    <property type="match status" value="9"/>
</dbReference>
<proteinExistence type="evidence at protein level"/>
<evidence type="ECO:0000255" key="1">
    <source>
        <dbReference type="PROSITE-ProRule" id="PRU00042"/>
    </source>
</evidence>
<evidence type="ECO:0000256" key="2">
    <source>
        <dbReference type="SAM" id="MobiDB-lite"/>
    </source>
</evidence>
<evidence type="ECO:0000269" key="3">
    <source>
    </source>
</evidence>
<evidence type="ECO:0000269" key="4">
    <source>
    </source>
</evidence>
<evidence type="ECO:0000269" key="5">
    <source>
    </source>
</evidence>
<evidence type="ECO:0000305" key="6"/>
<keyword id="KW-0010">Activator</keyword>
<keyword id="KW-0479">Metal-binding</keyword>
<keyword id="KW-0539">Nucleus</keyword>
<keyword id="KW-1267">Proteomics identification</keyword>
<keyword id="KW-1185">Reference proteome</keyword>
<keyword id="KW-0677">Repeat</keyword>
<keyword id="KW-0804">Transcription</keyword>
<keyword id="KW-0805">Transcription regulation</keyword>
<keyword id="KW-0862">Zinc</keyword>
<keyword id="KW-0863">Zinc-finger</keyword>
<name>ZXDA_HUMAN</name>
<reference key="1">
    <citation type="journal article" date="2005" name="Nature">
        <title>The DNA sequence of the human X chromosome.</title>
        <authorList>
            <person name="Ross M.T."/>
            <person name="Grafham D.V."/>
            <person name="Coffey A.J."/>
            <person name="Scherer S."/>
            <person name="McLay K."/>
            <person name="Muzny D."/>
            <person name="Platzer M."/>
            <person name="Howell G.R."/>
            <person name="Burrows C."/>
            <person name="Bird C.P."/>
            <person name="Frankish A."/>
            <person name="Lovell F.L."/>
            <person name="Howe K.L."/>
            <person name="Ashurst J.L."/>
            <person name="Fulton R.S."/>
            <person name="Sudbrak R."/>
            <person name="Wen G."/>
            <person name="Jones M.C."/>
            <person name="Hurles M.E."/>
            <person name="Andrews T.D."/>
            <person name="Scott C.E."/>
            <person name="Searle S."/>
            <person name="Ramser J."/>
            <person name="Whittaker A."/>
            <person name="Deadman R."/>
            <person name="Carter N.P."/>
            <person name="Hunt S.E."/>
            <person name="Chen R."/>
            <person name="Cree A."/>
            <person name="Gunaratne P."/>
            <person name="Havlak P."/>
            <person name="Hodgson A."/>
            <person name="Metzker M.L."/>
            <person name="Richards S."/>
            <person name="Scott G."/>
            <person name="Steffen D."/>
            <person name="Sodergren E."/>
            <person name="Wheeler D.A."/>
            <person name="Worley K.C."/>
            <person name="Ainscough R."/>
            <person name="Ambrose K.D."/>
            <person name="Ansari-Lari M.A."/>
            <person name="Aradhya S."/>
            <person name="Ashwell R.I."/>
            <person name="Babbage A.K."/>
            <person name="Bagguley C.L."/>
            <person name="Ballabio A."/>
            <person name="Banerjee R."/>
            <person name="Barker G.E."/>
            <person name="Barlow K.F."/>
            <person name="Barrett I.P."/>
            <person name="Bates K.N."/>
            <person name="Beare D.M."/>
            <person name="Beasley H."/>
            <person name="Beasley O."/>
            <person name="Beck A."/>
            <person name="Bethel G."/>
            <person name="Blechschmidt K."/>
            <person name="Brady N."/>
            <person name="Bray-Allen S."/>
            <person name="Bridgeman A.M."/>
            <person name="Brown A.J."/>
            <person name="Brown M.J."/>
            <person name="Bonnin D."/>
            <person name="Bruford E.A."/>
            <person name="Buhay C."/>
            <person name="Burch P."/>
            <person name="Burford D."/>
            <person name="Burgess J."/>
            <person name="Burrill W."/>
            <person name="Burton J."/>
            <person name="Bye J.M."/>
            <person name="Carder C."/>
            <person name="Carrel L."/>
            <person name="Chako J."/>
            <person name="Chapman J.C."/>
            <person name="Chavez D."/>
            <person name="Chen E."/>
            <person name="Chen G."/>
            <person name="Chen Y."/>
            <person name="Chen Z."/>
            <person name="Chinault C."/>
            <person name="Ciccodicola A."/>
            <person name="Clark S.Y."/>
            <person name="Clarke G."/>
            <person name="Clee C.M."/>
            <person name="Clegg S."/>
            <person name="Clerc-Blankenburg K."/>
            <person name="Clifford K."/>
            <person name="Cobley V."/>
            <person name="Cole C.G."/>
            <person name="Conquer J.S."/>
            <person name="Corby N."/>
            <person name="Connor R.E."/>
            <person name="David R."/>
            <person name="Davies J."/>
            <person name="Davis C."/>
            <person name="Davis J."/>
            <person name="Delgado O."/>
            <person name="Deshazo D."/>
            <person name="Dhami P."/>
            <person name="Ding Y."/>
            <person name="Dinh H."/>
            <person name="Dodsworth S."/>
            <person name="Draper H."/>
            <person name="Dugan-Rocha S."/>
            <person name="Dunham A."/>
            <person name="Dunn M."/>
            <person name="Durbin K.J."/>
            <person name="Dutta I."/>
            <person name="Eades T."/>
            <person name="Ellwood M."/>
            <person name="Emery-Cohen A."/>
            <person name="Errington H."/>
            <person name="Evans K.L."/>
            <person name="Faulkner L."/>
            <person name="Francis F."/>
            <person name="Frankland J."/>
            <person name="Fraser A.E."/>
            <person name="Galgoczy P."/>
            <person name="Gilbert J."/>
            <person name="Gill R."/>
            <person name="Gloeckner G."/>
            <person name="Gregory S.G."/>
            <person name="Gribble S."/>
            <person name="Griffiths C."/>
            <person name="Grocock R."/>
            <person name="Gu Y."/>
            <person name="Gwilliam R."/>
            <person name="Hamilton C."/>
            <person name="Hart E.A."/>
            <person name="Hawes A."/>
            <person name="Heath P.D."/>
            <person name="Heitmann K."/>
            <person name="Hennig S."/>
            <person name="Hernandez J."/>
            <person name="Hinzmann B."/>
            <person name="Ho S."/>
            <person name="Hoffs M."/>
            <person name="Howden P.J."/>
            <person name="Huckle E.J."/>
            <person name="Hume J."/>
            <person name="Hunt P.J."/>
            <person name="Hunt A.R."/>
            <person name="Isherwood J."/>
            <person name="Jacob L."/>
            <person name="Johnson D."/>
            <person name="Jones S."/>
            <person name="de Jong P.J."/>
            <person name="Joseph S.S."/>
            <person name="Keenan S."/>
            <person name="Kelly S."/>
            <person name="Kershaw J.K."/>
            <person name="Khan Z."/>
            <person name="Kioschis P."/>
            <person name="Klages S."/>
            <person name="Knights A.J."/>
            <person name="Kosiura A."/>
            <person name="Kovar-Smith C."/>
            <person name="Laird G.K."/>
            <person name="Langford C."/>
            <person name="Lawlor S."/>
            <person name="Leversha M."/>
            <person name="Lewis L."/>
            <person name="Liu W."/>
            <person name="Lloyd C."/>
            <person name="Lloyd D.M."/>
            <person name="Loulseged H."/>
            <person name="Loveland J.E."/>
            <person name="Lovell J.D."/>
            <person name="Lozado R."/>
            <person name="Lu J."/>
            <person name="Lyne R."/>
            <person name="Ma J."/>
            <person name="Maheshwari M."/>
            <person name="Matthews L.H."/>
            <person name="McDowall J."/>
            <person name="McLaren S."/>
            <person name="McMurray A."/>
            <person name="Meidl P."/>
            <person name="Meitinger T."/>
            <person name="Milne S."/>
            <person name="Miner G."/>
            <person name="Mistry S.L."/>
            <person name="Morgan M."/>
            <person name="Morris S."/>
            <person name="Mueller I."/>
            <person name="Mullikin J.C."/>
            <person name="Nguyen N."/>
            <person name="Nordsiek G."/>
            <person name="Nyakatura G."/>
            <person name="O'dell C.N."/>
            <person name="Okwuonu G."/>
            <person name="Palmer S."/>
            <person name="Pandian R."/>
            <person name="Parker D."/>
            <person name="Parrish J."/>
            <person name="Pasternak S."/>
            <person name="Patel D."/>
            <person name="Pearce A.V."/>
            <person name="Pearson D.M."/>
            <person name="Pelan S.E."/>
            <person name="Perez L."/>
            <person name="Porter K.M."/>
            <person name="Ramsey Y."/>
            <person name="Reichwald K."/>
            <person name="Rhodes S."/>
            <person name="Ridler K.A."/>
            <person name="Schlessinger D."/>
            <person name="Schueler M.G."/>
            <person name="Sehra H.K."/>
            <person name="Shaw-Smith C."/>
            <person name="Shen H."/>
            <person name="Sheridan E.M."/>
            <person name="Shownkeen R."/>
            <person name="Skuce C.D."/>
            <person name="Smith M.L."/>
            <person name="Sotheran E.C."/>
            <person name="Steingruber H.E."/>
            <person name="Steward C.A."/>
            <person name="Storey R."/>
            <person name="Swann R.M."/>
            <person name="Swarbreck D."/>
            <person name="Tabor P.E."/>
            <person name="Taudien S."/>
            <person name="Taylor T."/>
            <person name="Teague B."/>
            <person name="Thomas K."/>
            <person name="Thorpe A."/>
            <person name="Timms K."/>
            <person name="Tracey A."/>
            <person name="Trevanion S."/>
            <person name="Tromans A.C."/>
            <person name="d'Urso M."/>
            <person name="Verduzco D."/>
            <person name="Villasana D."/>
            <person name="Waldron L."/>
            <person name="Wall M."/>
            <person name="Wang Q."/>
            <person name="Warren J."/>
            <person name="Warry G.L."/>
            <person name="Wei X."/>
            <person name="West A."/>
            <person name="Whitehead S.L."/>
            <person name="Whiteley M.N."/>
            <person name="Wilkinson J.E."/>
            <person name="Willey D.L."/>
            <person name="Williams G."/>
            <person name="Williams L."/>
            <person name="Williamson A."/>
            <person name="Williamson H."/>
            <person name="Wilming L."/>
            <person name="Woodmansey R.L."/>
            <person name="Wray P.W."/>
            <person name="Yen J."/>
            <person name="Zhang J."/>
            <person name="Zhou J."/>
            <person name="Zoghbi H."/>
            <person name="Zorilla S."/>
            <person name="Buck D."/>
            <person name="Reinhardt R."/>
            <person name="Poustka A."/>
            <person name="Rosenthal A."/>
            <person name="Lehrach H."/>
            <person name="Meindl A."/>
            <person name="Minx P.J."/>
            <person name="Hillier L.W."/>
            <person name="Willard H.F."/>
            <person name="Wilson R.K."/>
            <person name="Waterston R.H."/>
            <person name="Rice C.M."/>
            <person name="Vaudin M."/>
            <person name="Coulson A."/>
            <person name="Nelson D.L."/>
            <person name="Weinstock G."/>
            <person name="Sulston J.E."/>
            <person name="Durbin R.M."/>
            <person name="Hubbard T."/>
            <person name="Gibbs R.A."/>
            <person name="Beck S."/>
            <person name="Rogers J."/>
            <person name="Bentley D.R."/>
        </authorList>
    </citation>
    <scope>NUCLEOTIDE SEQUENCE [LARGE SCALE GENOMIC DNA]</scope>
</reference>
<reference key="2">
    <citation type="journal article" date="2004" name="Genome Res.">
        <title>The status, quality, and expansion of the NIH full-length cDNA project: the Mammalian Gene Collection (MGC).</title>
        <authorList>
            <consortium name="The MGC Project Team"/>
        </authorList>
    </citation>
    <scope>NUCLEOTIDE SEQUENCE [LARGE SCALE MRNA]</scope>
    <source>
        <tissue>Placenta</tissue>
    </source>
</reference>
<reference key="3">
    <citation type="journal article" date="1993" name="Hum. Mol. Genet.">
        <title>Duplicated zinc finger protein genes on the proximal short arm of the human X chromosome: isolation, characterization and X-inactivation studies.</title>
        <authorList>
            <person name="Greig G.M."/>
            <person name="Sharp C.B."/>
            <person name="Carrel L."/>
            <person name="Willard H.F."/>
        </authorList>
    </citation>
    <scope>NUCLEOTIDE SEQUENCE [MRNA] OF 303-799</scope>
    <scope>TISSUE SPECIFICITY</scope>
    <source>
        <tissue>Brain</tissue>
    </source>
</reference>
<reference key="4">
    <citation type="journal article" date="2007" name="J. Mol. Biol.">
        <title>The zinc finger proteins ZXDA and ZXDC form a complex that binds CIITA and regulates MHC II gene transcription.</title>
        <authorList>
            <person name="Al-Kandari W."/>
            <person name="Koneni R."/>
            <person name="Navalgund V."/>
            <person name="Aleksandrova A."/>
            <person name="Jambunathan S."/>
            <person name="Fontes J.D."/>
        </authorList>
    </citation>
    <scope>FUNCTION</scope>
    <scope>SELF-ASSOCIATION</scope>
    <scope>INTERACTION WITH ZXDC AND CIITA</scope>
</reference>
<reference key="5">
    <citation type="journal article" date="2016" name="J. Med. Genet.">
        <title>Homozygous missense mutation in the LMAN2L gene segregates with intellectual disability in a large consanguineous Pakistani family.</title>
        <authorList>
            <person name="Rafiullah R."/>
            <person name="Aslamkhan M."/>
            <person name="Paramasivam N."/>
            <person name="Thiel C."/>
            <person name="Mustafa G."/>
            <person name="Wiemann S."/>
            <person name="Schlesner M."/>
            <person name="Wade R.C."/>
            <person name="Rappold G.A."/>
            <person name="Berkel S."/>
        </authorList>
    </citation>
    <scope>VARIANT GLY-202</scope>
</reference>
<accession>P98168</accession>
<accession>Q9UJP7</accession>
<feature type="chain" id="PRO_0000047776" description="Zinc finger X-linked protein ZXDA">
    <location>
        <begin position="1"/>
        <end position="799"/>
    </location>
</feature>
<feature type="zinc finger region" description="C2H2-type 1" evidence="1">
    <location>
        <begin position="267"/>
        <end position="291"/>
    </location>
</feature>
<feature type="zinc finger region" description="C2H2-type 2" evidence="1">
    <location>
        <begin position="300"/>
        <end position="324"/>
    </location>
</feature>
<feature type="zinc finger region" description="C2H2-type 3" evidence="1">
    <location>
        <begin position="330"/>
        <end position="354"/>
    </location>
</feature>
<feature type="zinc finger region" description="C2H2-type 4" evidence="1">
    <location>
        <begin position="360"/>
        <end position="382"/>
    </location>
</feature>
<feature type="zinc finger region" description="C2H2-type 5" evidence="1">
    <location>
        <begin position="389"/>
        <end position="413"/>
    </location>
</feature>
<feature type="zinc finger region" description="C2H2-type 6" evidence="1">
    <location>
        <begin position="420"/>
        <end position="444"/>
    </location>
</feature>
<feature type="zinc finger region" description="C2H2-type 7" evidence="1">
    <location>
        <begin position="450"/>
        <end position="474"/>
    </location>
</feature>
<feature type="zinc finger region" description="C2H2-type 8" evidence="1">
    <location>
        <begin position="480"/>
        <end position="504"/>
    </location>
</feature>
<feature type="zinc finger region" description="C2H2-type 9" evidence="1">
    <location>
        <begin position="510"/>
        <end position="534"/>
    </location>
</feature>
<feature type="zinc finger region" description="C2H2-type 10" evidence="1">
    <location>
        <begin position="543"/>
        <end position="568"/>
    </location>
</feature>
<feature type="region of interest" description="Disordered" evidence="2">
    <location>
        <begin position="1"/>
        <end position="89"/>
    </location>
</feature>
<feature type="region of interest" description="Required for interaction with ZXDC" evidence="3">
    <location>
        <begin position="267"/>
        <end position="573"/>
    </location>
</feature>
<feature type="region of interest" description="Required for transcriptional activation">
    <location>
        <begin position="572"/>
        <end position="699"/>
    </location>
</feature>
<feature type="compositionally biased region" description="Gly residues" evidence="2">
    <location>
        <begin position="13"/>
        <end position="26"/>
    </location>
</feature>
<feature type="sequence variant" id="VAR_076439" description="In dbSNP:rs139564495." evidence="4">
    <original>R</original>
    <variation>G</variation>
    <location>
        <position position="202"/>
    </location>
</feature>
<feature type="sequence variant" id="VAR_033002" description="In dbSNP:rs1057327.">
    <original>G</original>
    <variation>S</variation>
    <location>
        <position position="376"/>
    </location>
</feature>
<organism>
    <name type="scientific">Homo sapiens</name>
    <name type="common">Human</name>
    <dbReference type="NCBI Taxonomy" id="9606"/>
    <lineage>
        <taxon>Eukaryota</taxon>
        <taxon>Metazoa</taxon>
        <taxon>Chordata</taxon>
        <taxon>Craniata</taxon>
        <taxon>Vertebrata</taxon>
        <taxon>Euteleostomi</taxon>
        <taxon>Mammalia</taxon>
        <taxon>Eutheria</taxon>
        <taxon>Euarchontoglires</taxon>
        <taxon>Primates</taxon>
        <taxon>Haplorrhini</taxon>
        <taxon>Catarrhini</taxon>
        <taxon>Hominidae</taxon>
        <taxon>Homo</taxon>
    </lineage>
</organism>
<comment type="function">
    <text evidence="3">Cooperates with CIITA to promote transcription of MHC class I and MHC class II genes.</text>
</comment>
<comment type="subunit">
    <text evidence="3">Self-associates. Interacts with ZXDC and CIITA.</text>
</comment>
<comment type="interaction">
    <interactant intactId="EBI-1538980">
        <id>P98168</id>
    </interactant>
    <interactant intactId="EBI-1538819">
        <id>P33076</id>
        <label>CIITA</label>
    </interactant>
    <organismsDiffer>false</organismsDiffer>
    <experiments>4</experiments>
</comment>
<comment type="interaction">
    <interactant intactId="EBI-1538980">
        <id>P98168</id>
    </interactant>
    <interactant intactId="EBI-1538838">
        <id>Q2QGD7</id>
        <label>ZXDC</label>
    </interactant>
    <organismsDiffer>false</organismsDiffer>
    <experiments>5</experiments>
</comment>
<comment type="subcellular location">
    <subcellularLocation>
        <location evidence="6">Nucleus</location>
    </subcellularLocation>
</comment>
<comment type="tissue specificity">
    <text evidence="5">May be expressed in brain, heart, kidney, liver, lung, muscle and placenta.</text>
</comment>
<comment type="similarity">
    <text evidence="6">Belongs to the ZXD family.</text>
</comment>
<comment type="sequence caution" evidence="6">
    <conflict type="frameshift">
        <sequence resource="EMBL-CDS" id="AAC37521"/>
    </conflict>
</comment>
<sequence>MEIPKLLPARGTLQGGGGGGIPAGGGRVHRGPDSPAGQVPTRRLLLPRGPQDGGPGRRREEASTASRGPGPSLFAPRPHQPSGGGDDFFLVLLDPVGGDVETAGSGQAAGPVLREEAKAGPGLQGDESGANPAGCSAQGPHCLSAVPTPAPISAPGPAAAFAGTVTIHNQDLLLRFENGVLTLATPPPHAWEPGAAPAQQPRCLIAPQAGFPQAAHPGDCPELRSDLLLAEPAEPAPAPAPQEEAEGLAAALGPRGLLGSGPGVVLYLCPEALCGQTFAKKHQLKMHLLTHSSSQGQRPFKCPLGGCGWTFTTSYKLKRHLQSHDKLRPFGCPAEGCGKSFTTVYNLKAHMKGHEQENSFKCEVCEESFPTQAKLGAHQRSHFEPERPYQCAFSGCKKTFITVSALFSHNRAHFREQELFSCSFPGCSKQYDKACRLKIHLRSHTGERPFLCDFDGCGWNFTSMSKLLRHKRKHDDDRRFMCPVEGCGKSFTRAEHLKGHSITHLGTKPFVCPVAGCCARFSARSSLYIHSKKHLQDVDTWKSRCPISSCNKLFTSKHSMKTHMVKRHKVGQDLLAQLEAANSLTPSSELTSQRQNDLSDAEIVSLFSDVPDSTSAALLDTALVNSGILTIDVASVSSTLAGHLPANNNNSVGQAVDPPSLMATSDPPQSLDTSLFFGTAATGFQQSSLNMDEVSSVSVGPLGSLDSLAMKNSSPEPQALTPSSKLTVDTDTLTPSSTLCENSVSELLTPAKAEWSVHPNSDFFGQEGETQFGFPNAAGNHGSQKERNLITVTGSSFLV</sequence>